<sequence length="155" mass="17723">MSVTLDLQIACADSTGLPSETQFQQWLDTAVLPFQQEAEVTIRLVDEAESNELNLTYRGKDKPTNVLSFPFECPPEVEDFPLLGDLIICRQVVEKEALEQQKTLESHWAHMVIHGSLHLLGYDHIEDEEAEEMEALEKEFMQTLGFPDPYKDDEI</sequence>
<protein>
    <recommendedName>
        <fullName evidence="1">Endoribonuclease YbeY</fullName>
        <ecNumber evidence="1">3.1.-.-</ecNumber>
    </recommendedName>
</protein>
<feature type="chain" id="PRO_1000201746" description="Endoribonuclease YbeY">
    <location>
        <begin position="1"/>
        <end position="155"/>
    </location>
</feature>
<feature type="binding site" evidence="1">
    <location>
        <position position="114"/>
    </location>
    <ligand>
        <name>Zn(2+)</name>
        <dbReference type="ChEBI" id="CHEBI:29105"/>
        <note>catalytic</note>
    </ligand>
</feature>
<feature type="binding site" evidence="1">
    <location>
        <position position="118"/>
    </location>
    <ligand>
        <name>Zn(2+)</name>
        <dbReference type="ChEBI" id="CHEBI:29105"/>
        <note>catalytic</note>
    </ligand>
</feature>
<feature type="binding site" evidence="1">
    <location>
        <position position="124"/>
    </location>
    <ligand>
        <name>Zn(2+)</name>
        <dbReference type="ChEBI" id="CHEBI:29105"/>
        <note>catalytic</note>
    </ligand>
</feature>
<gene>
    <name evidence="1" type="primary">ybeY</name>
    <name type="ordered locus">Tola_2719</name>
</gene>
<comment type="function">
    <text evidence="1">Single strand-specific metallo-endoribonuclease involved in late-stage 70S ribosome quality control and in maturation of the 3' terminus of the 16S rRNA.</text>
</comment>
<comment type="cofactor">
    <cofactor evidence="1">
        <name>Zn(2+)</name>
        <dbReference type="ChEBI" id="CHEBI:29105"/>
    </cofactor>
    <text evidence="1">Binds 1 zinc ion.</text>
</comment>
<comment type="subcellular location">
    <subcellularLocation>
        <location evidence="1">Cytoplasm</location>
    </subcellularLocation>
</comment>
<comment type="similarity">
    <text evidence="1">Belongs to the endoribonuclease YbeY family.</text>
</comment>
<organism>
    <name type="scientific">Tolumonas auensis (strain DSM 9187 / NBRC 110442 / TA 4)</name>
    <dbReference type="NCBI Taxonomy" id="595494"/>
    <lineage>
        <taxon>Bacteria</taxon>
        <taxon>Pseudomonadati</taxon>
        <taxon>Pseudomonadota</taxon>
        <taxon>Gammaproteobacteria</taxon>
        <taxon>Aeromonadales</taxon>
        <taxon>Aeromonadaceae</taxon>
        <taxon>Tolumonas</taxon>
    </lineage>
</organism>
<name>YBEY_TOLAT</name>
<reference key="1">
    <citation type="submission" date="2009-05" db="EMBL/GenBank/DDBJ databases">
        <title>Complete sequence of Tolumonas auensis DSM 9187.</title>
        <authorList>
            <consortium name="US DOE Joint Genome Institute"/>
            <person name="Lucas S."/>
            <person name="Copeland A."/>
            <person name="Lapidus A."/>
            <person name="Glavina del Rio T."/>
            <person name="Tice H."/>
            <person name="Bruce D."/>
            <person name="Goodwin L."/>
            <person name="Pitluck S."/>
            <person name="Chertkov O."/>
            <person name="Brettin T."/>
            <person name="Detter J.C."/>
            <person name="Han C."/>
            <person name="Larimer F."/>
            <person name="Land M."/>
            <person name="Hauser L."/>
            <person name="Kyrpides N."/>
            <person name="Mikhailova N."/>
            <person name="Spring S."/>
            <person name="Beller H."/>
        </authorList>
    </citation>
    <scope>NUCLEOTIDE SEQUENCE [LARGE SCALE GENOMIC DNA]</scope>
    <source>
        <strain>DSM 9187 / NBRC 110442 / TA 4</strain>
    </source>
</reference>
<accession>C4LBN8</accession>
<proteinExistence type="inferred from homology"/>
<evidence type="ECO:0000255" key="1">
    <source>
        <dbReference type="HAMAP-Rule" id="MF_00009"/>
    </source>
</evidence>
<keyword id="KW-0963">Cytoplasm</keyword>
<keyword id="KW-0255">Endonuclease</keyword>
<keyword id="KW-0378">Hydrolase</keyword>
<keyword id="KW-0479">Metal-binding</keyword>
<keyword id="KW-0540">Nuclease</keyword>
<keyword id="KW-1185">Reference proteome</keyword>
<keyword id="KW-0690">Ribosome biogenesis</keyword>
<keyword id="KW-0698">rRNA processing</keyword>
<keyword id="KW-0862">Zinc</keyword>
<dbReference type="EC" id="3.1.-.-" evidence="1"/>
<dbReference type="EMBL" id="CP001616">
    <property type="protein sequence ID" value="ACQ94312.1"/>
    <property type="molecule type" value="Genomic_DNA"/>
</dbReference>
<dbReference type="RefSeq" id="WP_015879761.1">
    <property type="nucleotide sequence ID" value="NC_012691.1"/>
</dbReference>
<dbReference type="SMR" id="C4LBN8"/>
<dbReference type="STRING" id="595494.Tola_2719"/>
<dbReference type="KEGG" id="tau:Tola_2719"/>
<dbReference type="eggNOG" id="COG0319">
    <property type="taxonomic scope" value="Bacteria"/>
</dbReference>
<dbReference type="HOGENOM" id="CLU_106710_0_1_6"/>
<dbReference type="OrthoDB" id="9807740at2"/>
<dbReference type="Proteomes" id="UP000009073">
    <property type="component" value="Chromosome"/>
</dbReference>
<dbReference type="GO" id="GO:0005737">
    <property type="term" value="C:cytoplasm"/>
    <property type="evidence" value="ECO:0007669"/>
    <property type="project" value="UniProtKB-SubCell"/>
</dbReference>
<dbReference type="GO" id="GO:0004222">
    <property type="term" value="F:metalloendopeptidase activity"/>
    <property type="evidence" value="ECO:0007669"/>
    <property type="project" value="InterPro"/>
</dbReference>
<dbReference type="GO" id="GO:0004521">
    <property type="term" value="F:RNA endonuclease activity"/>
    <property type="evidence" value="ECO:0007669"/>
    <property type="project" value="UniProtKB-UniRule"/>
</dbReference>
<dbReference type="GO" id="GO:0008270">
    <property type="term" value="F:zinc ion binding"/>
    <property type="evidence" value="ECO:0007669"/>
    <property type="project" value="UniProtKB-UniRule"/>
</dbReference>
<dbReference type="GO" id="GO:0006364">
    <property type="term" value="P:rRNA processing"/>
    <property type="evidence" value="ECO:0007669"/>
    <property type="project" value="UniProtKB-UniRule"/>
</dbReference>
<dbReference type="Gene3D" id="3.40.390.30">
    <property type="entry name" value="Metalloproteases ('zincins'), catalytic domain"/>
    <property type="match status" value="1"/>
</dbReference>
<dbReference type="HAMAP" id="MF_00009">
    <property type="entry name" value="Endoribonucl_YbeY"/>
    <property type="match status" value="1"/>
</dbReference>
<dbReference type="InterPro" id="IPR023091">
    <property type="entry name" value="MetalPrtase_cat_dom_sf_prd"/>
</dbReference>
<dbReference type="InterPro" id="IPR002036">
    <property type="entry name" value="YbeY"/>
</dbReference>
<dbReference type="InterPro" id="IPR020549">
    <property type="entry name" value="YbeY_CS"/>
</dbReference>
<dbReference type="NCBIfam" id="TIGR00043">
    <property type="entry name" value="rRNA maturation RNase YbeY"/>
    <property type="match status" value="1"/>
</dbReference>
<dbReference type="PANTHER" id="PTHR46986">
    <property type="entry name" value="ENDORIBONUCLEASE YBEY, CHLOROPLASTIC"/>
    <property type="match status" value="1"/>
</dbReference>
<dbReference type="PANTHER" id="PTHR46986:SF1">
    <property type="entry name" value="ENDORIBONUCLEASE YBEY, CHLOROPLASTIC"/>
    <property type="match status" value="1"/>
</dbReference>
<dbReference type="Pfam" id="PF02130">
    <property type="entry name" value="YbeY"/>
    <property type="match status" value="1"/>
</dbReference>
<dbReference type="SUPFAM" id="SSF55486">
    <property type="entry name" value="Metalloproteases ('zincins'), catalytic domain"/>
    <property type="match status" value="1"/>
</dbReference>
<dbReference type="PROSITE" id="PS01306">
    <property type="entry name" value="UPF0054"/>
    <property type="match status" value="1"/>
</dbReference>